<organism>
    <name type="scientific">Dictyostelium discoideum</name>
    <name type="common">Social amoeba</name>
    <dbReference type="NCBI Taxonomy" id="44689"/>
    <lineage>
        <taxon>Eukaryota</taxon>
        <taxon>Amoebozoa</taxon>
        <taxon>Evosea</taxon>
        <taxon>Eumycetozoa</taxon>
        <taxon>Dictyostelia</taxon>
        <taxon>Dictyosteliales</taxon>
        <taxon>Dictyosteliaceae</taxon>
        <taxon>Dictyostelium</taxon>
    </lineage>
</organism>
<feature type="chain" id="PRO_0000369245" description="Probable protein phosphatase DDB_G0279461">
    <location>
        <begin position="1"/>
        <end position="1006"/>
    </location>
</feature>
<feature type="domain" description="PPM-type phosphatase" evidence="3">
    <location>
        <begin position="744"/>
        <end position="1005"/>
    </location>
</feature>
<feature type="region of interest" description="Disordered" evidence="4">
    <location>
        <begin position="1"/>
        <end position="119"/>
    </location>
</feature>
<feature type="region of interest" description="Disordered" evidence="4">
    <location>
        <begin position="146"/>
        <end position="188"/>
    </location>
</feature>
<feature type="region of interest" description="Disordered" evidence="4">
    <location>
        <begin position="214"/>
        <end position="269"/>
    </location>
</feature>
<feature type="region of interest" description="Disordered" evidence="4">
    <location>
        <begin position="312"/>
        <end position="387"/>
    </location>
</feature>
<feature type="region of interest" description="Disordered" evidence="4">
    <location>
        <begin position="459"/>
        <end position="513"/>
    </location>
</feature>
<feature type="region of interest" description="Disordered" evidence="4">
    <location>
        <begin position="525"/>
        <end position="563"/>
    </location>
</feature>
<feature type="region of interest" description="Disordered" evidence="4">
    <location>
        <begin position="604"/>
        <end position="642"/>
    </location>
</feature>
<feature type="coiled-coil region" evidence="2">
    <location>
        <begin position="65"/>
        <end position="122"/>
    </location>
</feature>
<feature type="coiled-coil region" evidence="2">
    <location>
        <begin position="450"/>
        <end position="516"/>
    </location>
</feature>
<feature type="compositionally biased region" description="Polar residues" evidence="4">
    <location>
        <begin position="1"/>
        <end position="12"/>
    </location>
</feature>
<feature type="compositionally biased region" description="Acidic residues" evidence="4">
    <location>
        <begin position="59"/>
        <end position="69"/>
    </location>
</feature>
<feature type="compositionally biased region" description="Low complexity" evidence="4">
    <location>
        <begin position="77"/>
        <end position="88"/>
    </location>
</feature>
<feature type="compositionally biased region" description="Acidic residues" evidence="4">
    <location>
        <begin position="89"/>
        <end position="99"/>
    </location>
</feature>
<feature type="compositionally biased region" description="Low complexity" evidence="4">
    <location>
        <begin position="100"/>
        <end position="117"/>
    </location>
</feature>
<feature type="compositionally biased region" description="Polar residues" evidence="4">
    <location>
        <begin position="146"/>
        <end position="158"/>
    </location>
</feature>
<feature type="compositionally biased region" description="Low complexity" evidence="4">
    <location>
        <begin position="220"/>
        <end position="234"/>
    </location>
</feature>
<feature type="compositionally biased region" description="Low complexity" evidence="4">
    <location>
        <begin position="244"/>
        <end position="254"/>
    </location>
</feature>
<feature type="compositionally biased region" description="Low complexity" evidence="4">
    <location>
        <begin position="316"/>
        <end position="387"/>
    </location>
</feature>
<feature type="compositionally biased region" description="Polar residues" evidence="4">
    <location>
        <begin position="466"/>
        <end position="481"/>
    </location>
</feature>
<feature type="compositionally biased region" description="Low complexity" evidence="4">
    <location>
        <begin position="482"/>
        <end position="511"/>
    </location>
</feature>
<feature type="compositionally biased region" description="Polar residues" evidence="4">
    <location>
        <begin position="525"/>
        <end position="538"/>
    </location>
</feature>
<feature type="compositionally biased region" description="Low complexity" evidence="4">
    <location>
        <begin position="552"/>
        <end position="561"/>
    </location>
</feature>
<feature type="compositionally biased region" description="Low complexity" evidence="4">
    <location>
        <begin position="613"/>
        <end position="639"/>
    </location>
</feature>
<feature type="binding site" evidence="1">
    <location>
        <position position="784"/>
    </location>
    <ligand>
        <name>Mn(2+)</name>
        <dbReference type="ChEBI" id="CHEBI:29035"/>
        <label>1</label>
    </ligand>
</feature>
<feature type="binding site" evidence="1">
    <location>
        <position position="784"/>
    </location>
    <ligand>
        <name>Mn(2+)</name>
        <dbReference type="ChEBI" id="CHEBI:29035"/>
        <label>2</label>
    </ligand>
</feature>
<feature type="binding site" evidence="1">
    <location>
        <position position="785"/>
    </location>
    <ligand>
        <name>Mn(2+)</name>
        <dbReference type="ChEBI" id="CHEBI:29035"/>
        <label>1</label>
    </ligand>
</feature>
<feature type="binding site" evidence="1">
    <location>
        <position position="956"/>
    </location>
    <ligand>
        <name>Mn(2+)</name>
        <dbReference type="ChEBI" id="CHEBI:29035"/>
        <label>2</label>
    </ligand>
</feature>
<feature type="binding site" evidence="1">
    <location>
        <position position="996"/>
    </location>
    <ligand>
        <name>Mn(2+)</name>
        <dbReference type="ChEBI" id="CHEBI:29035"/>
        <label>2</label>
    </ligand>
</feature>
<evidence type="ECO:0000250" key="1"/>
<evidence type="ECO:0000255" key="2"/>
<evidence type="ECO:0000255" key="3">
    <source>
        <dbReference type="PROSITE-ProRule" id="PRU01082"/>
    </source>
</evidence>
<evidence type="ECO:0000256" key="4">
    <source>
        <dbReference type="SAM" id="MobiDB-lite"/>
    </source>
</evidence>
<evidence type="ECO:0000305" key="5"/>
<sequence>MMVPSLSTSISSPALFKNREGGEEGNDGGLEQLQNQVNDLGDLNFNEEGDYNNDQQPTNEEEGTADNELESLMSLVNDNNNNNNNTSGIDDDNNNDIDDNNNNNNNNNNNNNNNNNNKEGLNDLFISSINVSTLLNDLDQLSDTHSHASVSNQSSNGSVRRGYDIKTQRSVGTKGQGGSSGSSPRSNSLRVYRTFPYRGDHHFSWLNNIRDVDSSEDPNSCHNSNNNNKNNKNNQPSSTHDQTNINNNNNNNCNDNEKPIKPNSTNGIRHSRKYKGLQQLDFLGSNIILPQQQQPQPIEDNQQVVPQPFQVDAESNYNNNNNNNNNNNNNNNNNNNNNNNNNNNNNNDNENNQHPINPVNTQNTQQNVTHSNNNNNNNNNNTAPPNQWSELIESLGYGSQSDEQKTFGSTLDDLNNANSCSDLKDLIVDGISINNETSPSQSQEITDFSKIDNLNKNININNNNNTDSQQPLPSIDVNFSHNNNNNNNDNDNNNNNNNNNNNNNNNNNNNNIQDIQIPYHQNDQDYNIQEGNDINNDNYEIRVSNNDDDNDSSNNNNNNNSKFQENLNLLNTGMGGRICKTDQKKQLSRTITFADPSSILSFFGSIPTDEDQNNNNNKNKNTTTTTTTTNTTTTTTTTTSASAAAQNKLDLLSSLSAGQSSGGVGGGNNVLNSSSTPAIKVNHQHKVTEQNRTSSKISLSTIFPKLPPFTNQQSPPTLSPSKYYYPLLQPEPTTLIRGFSSAADINKRGLKRAKKPMEMEDVYLTQYPLGDDQDSQIALFAIFDGHSGKGCAVAAKEIFPNILLKYIKSTKNENGGKPIYDMRGVFLNAFKEVDAQLSKFEYEGATATVCLVWRAGHQRFVQSANVGDSTAFLSYGNETLFLSKDHRATDPEEIQRIKNDGITLTEGQTRINGLMVSRALGDHFIKHLNCGLSGEPYVSPPISITPFHSHLIVASDGLWDVISGNRAMEIVKVQQTEEKMSNSLLQCAIGSIKAKDNISIIVVTLQ</sequence>
<comment type="catalytic activity">
    <reaction>
        <text>O-phospho-L-seryl-[protein] + H2O = L-seryl-[protein] + phosphate</text>
        <dbReference type="Rhea" id="RHEA:20629"/>
        <dbReference type="Rhea" id="RHEA-COMP:9863"/>
        <dbReference type="Rhea" id="RHEA-COMP:11604"/>
        <dbReference type="ChEBI" id="CHEBI:15377"/>
        <dbReference type="ChEBI" id="CHEBI:29999"/>
        <dbReference type="ChEBI" id="CHEBI:43474"/>
        <dbReference type="ChEBI" id="CHEBI:83421"/>
        <dbReference type="EC" id="3.1.3.16"/>
    </reaction>
</comment>
<comment type="catalytic activity">
    <reaction>
        <text>O-phospho-L-threonyl-[protein] + H2O = L-threonyl-[protein] + phosphate</text>
        <dbReference type="Rhea" id="RHEA:47004"/>
        <dbReference type="Rhea" id="RHEA-COMP:11060"/>
        <dbReference type="Rhea" id="RHEA-COMP:11605"/>
        <dbReference type="ChEBI" id="CHEBI:15377"/>
        <dbReference type="ChEBI" id="CHEBI:30013"/>
        <dbReference type="ChEBI" id="CHEBI:43474"/>
        <dbReference type="ChEBI" id="CHEBI:61977"/>
        <dbReference type="EC" id="3.1.3.16"/>
    </reaction>
</comment>
<comment type="cofactor">
    <cofactor evidence="1">
        <name>Mg(2+)</name>
        <dbReference type="ChEBI" id="CHEBI:18420"/>
    </cofactor>
    <cofactor evidence="1">
        <name>Mn(2+)</name>
        <dbReference type="ChEBI" id="CHEBI:29035"/>
    </cofactor>
    <text evidence="1">Binds 2 magnesium or manganese ions per subunit.</text>
</comment>
<comment type="similarity">
    <text evidence="5">In the C-terminal section; belongs to the PP2C family.</text>
</comment>
<proteinExistence type="inferred from homology"/>
<name>Y9461_DICDI</name>
<keyword id="KW-0175">Coiled coil</keyword>
<keyword id="KW-0378">Hydrolase</keyword>
<keyword id="KW-0460">Magnesium</keyword>
<keyword id="KW-0464">Manganese</keyword>
<keyword id="KW-0479">Metal-binding</keyword>
<keyword id="KW-0904">Protein phosphatase</keyword>
<keyword id="KW-1185">Reference proteome</keyword>
<protein>
    <recommendedName>
        <fullName>Probable protein phosphatase DDB_G0279461</fullName>
        <ecNumber>3.1.3.16</ecNumber>
    </recommendedName>
</protein>
<accession>Q54WS9</accession>
<gene>
    <name type="ORF">DDB_G0279461</name>
</gene>
<reference key="1">
    <citation type="journal article" date="2005" name="Nature">
        <title>The genome of the social amoeba Dictyostelium discoideum.</title>
        <authorList>
            <person name="Eichinger L."/>
            <person name="Pachebat J.A."/>
            <person name="Gloeckner G."/>
            <person name="Rajandream M.A."/>
            <person name="Sucgang R."/>
            <person name="Berriman M."/>
            <person name="Song J."/>
            <person name="Olsen R."/>
            <person name="Szafranski K."/>
            <person name="Xu Q."/>
            <person name="Tunggal B."/>
            <person name="Kummerfeld S."/>
            <person name="Madera M."/>
            <person name="Konfortov B.A."/>
            <person name="Rivero F."/>
            <person name="Bankier A.T."/>
            <person name="Lehmann R."/>
            <person name="Hamlin N."/>
            <person name="Davies R."/>
            <person name="Gaudet P."/>
            <person name="Fey P."/>
            <person name="Pilcher K."/>
            <person name="Chen G."/>
            <person name="Saunders D."/>
            <person name="Sodergren E.J."/>
            <person name="Davis P."/>
            <person name="Kerhornou A."/>
            <person name="Nie X."/>
            <person name="Hall N."/>
            <person name="Anjard C."/>
            <person name="Hemphill L."/>
            <person name="Bason N."/>
            <person name="Farbrother P."/>
            <person name="Desany B."/>
            <person name="Just E."/>
            <person name="Morio T."/>
            <person name="Rost R."/>
            <person name="Churcher C.M."/>
            <person name="Cooper J."/>
            <person name="Haydock S."/>
            <person name="van Driessche N."/>
            <person name="Cronin A."/>
            <person name="Goodhead I."/>
            <person name="Muzny D.M."/>
            <person name="Mourier T."/>
            <person name="Pain A."/>
            <person name="Lu M."/>
            <person name="Harper D."/>
            <person name="Lindsay R."/>
            <person name="Hauser H."/>
            <person name="James K.D."/>
            <person name="Quiles M."/>
            <person name="Madan Babu M."/>
            <person name="Saito T."/>
            <person name="Buchrieser C."/>
            <person name="Wardroper A."/>
            <person name="Felder M."/>
            <person name="Thangavelu M."/>
            <person name="Johnson D."/>
            <person name="Knights A."/>
            <person name="Loulseged H."/>
            <person name="Mungall K.L."/>
            <person name="Oliver K."/>
            <person name="Price C."/>
            <person name="Quail M.A."/>
            <person name="Urushihara H."/>
            <person name="Hernandez J."/>
            <person name="Rabbinowitsch E."/>
            <person name="Steffen D."/>
            <person name="Sanders M."/>
            <person name="Ma J."/>
            <person name="Kohara Y."/>
            <person name="Sharp S."/>
            <person name="Simmonds M.N."/>
            <person name="Spiegler S."/>
            <person name="Tivey A."/>
            <person name="Sugano S."/>
            <person name="White B."/>
            <person name="Walker D."/>
            <person name="Woodward J.R."/>
            <person name="Winckler T."/>
            <person name="Tanaka Y."/>
            <person name="Shaulsky G."/>
            <person name="Schleicher M."/>
            <person name="Weinstock G.M."/>
            <person name="Rosenthal A."/>
            <person name="Cox E.C."/>
            <person name="Chisholm R.L."/>
            <person name="Gibbs R.A."/>
            <person name="Loomis W.F."/>
            <person name="Platzer M."/>
            <person name="Kay R.R."/>
            <person name="Williams J.G."/>
            <person name="Dear P.H."/>
            <person name="Noegel A.A."/>
            <person name="Barrell B.G."/>
            <person name="Kuspa A."/>
        </authorList>
    </citation>
    <scope>NUCLEOTIDE SEQUENCE [LARGE SCALE GENOMIC DNA]</scope>
    <source>
        <strain>AX4</strain>
    </source>
</reference>
<dbReference type="EC" id="3.1.3.16"/>
<dbReference type="EMBL" id="AAFI02000031">
    <property type="protein sequence ID" value="EAL67669.2"/>
    <property type="molecule type" value="Genomic_DNA"/>
</dbReference>
<dbReference type="RefSeq" id="XP_641638.2">
    <property type="nucleotide sequence ID" value="XM_636546.2"/>
</dbReference>
<dbReference type="FunCoup" id="Q54WS9">
    <property type="interactions" value="141"/>
</dbReference>
<dbReference type="STRING" id="44689.Q54WS9"/>
<dbReference type="GlyGen" id="Q54WS9">
    <property type="glycosylation" value="1 site"/>
</dbReference>
<dbReference type="PaxDb" id="44689-DDB0304651"/>
<dbReference type="EnsemblProtists" id="EAL67669">
    <property type="protein sequence ID" value="EAL67669"/>
    <property type="gene ID" value="DDB_G0279461"/>
</dbReference>
<dbReference type="GeneID" id="8622044"/>
<dbReference type="KEGG" id="ddi:DDB_G0279461"/>
<dbReference type="dictyBase" id="DDB_G0279461"/>
<dbReference type="VEuPathDB" id="AmoebaDB:DDB_G0279461"/>
<dbReference type="eggNOG" id="KOG0698">
    <property type="taxonomic scope" value="Eukaryota"/>
</dbReference>
<dbReference type="HOGENOM" id="CLU_298681_0_0_1"/>
<dbReference type="InParanoid" id="Q54WS9"/>
<dbReference type="PRO" id="PR:Q54WS9"/>
<dbReference type="Proteomes" id="UP000002195">
    <property type="component" value="Chromosome 3"/>
</dbReference>
<dbReference type="GO" id="GO:0046872">
    <property type="term" value="F:metal ion binding"/>
    <property type="evidence" value="ECO:0007669"/>
    <property type="project" value="UniProtKB-KW"/>
</dbReference>
<dbReference type="GO" id="GO:0004722">
    <property type="term" value="F:protein serine/threonine phosphatase activity"/>
    <property type="evidence" value="ECO:0007669"/>
    <property type="project" value="UniProtKB-EC"/>
</dbReference>
<dbReference type="GO" id="GO:0007165">
    <property type="term" value="P:signal transduction"/>
    <property type="evidence" value="ECO:0000318"/>
    <property type="project" value="GO_Central"/>
</dbReference>
<dbReference type="CDD" id="cd00143">
    <property type="entry name" value="PP2Cc"/>
    <property type="match status" value="1"/>
</dbReference>
<dbReference type="Gene3D" id="3.60.40.10">
    <property type="entry name" value="PPM-type phosphatase domain"/>
    <property type="match status" value="1"/>
</dbReference>
<dbReference type="InterPro" id="IPR015655">
    <property type="entry name" value="PP2C"/>
</dbReference>
<dbReference type="InterPro" id="IPR036457">
    <property type="entry name" value="PPM-type-like_dom_sf"/>
</dbReference>
<dbReference type="InterPro" id="IPR001932">
    <property type="entry name" value="PPM-type_phosphatase-like_dom"/>
</dbReference>
<dbReference type="PANTHER" id="PTHR13832">
    <property type="entry name" value="PROTEIN PHOSPHATASE 2C"/>
    <property type="match status" value="1"/>
</dbReference>
<dbReference type="PANTHER" id="PTHR13832:SF534">
    <property type="entry name" value="PROTEIN PHOSPHATASE DDB_G0279461-RELATED"/>
    <property type="match status" value="1"/>
</dbReference>
<dbReference type="Pfam" id="PF00481">
    <property type="entry name" value="PP2C"/>
    <property type="match status" value="1"/>
</dbReference>
<dbReference type="SMART" id="SM00332">
    <property type="entry name" value="PP2Cc"/>
    <property type="match status" value="1"/>
</dbReference>
<dbReference type="SUPFAM" id="SSF81606">
    <property type="entry name" value="PP2C-like"/>
    <property type="match status" value="1"/>
</dbReference>
<dbReference type="PROSITE" id="PS51746">
    <property type="entry name" value="PPM_2"/>
    <property type="match status" value="1"/>
</dbReference>